<accession>Q77WJ4</accession>
<reference key="1">
    <citation type="journal article" date="1998" name="Mol. Microbiol.">
        <title>Molecular analysis of Methanobacterium phage psiM2.</title>
        <authorList>
            <person name="Pfister P."/>
            <person name="Wasserfallen A."/>
            <person name="Stettler R."/>
            <person name="Leisinger T."/>
        </authorList>
    </citation>
    <scope>NUCLEOTIDE SEQUENCE [GENOMIC DNA]</scope>
</reference>
<reference key="2">
    <citation type="journal article" date="2002" name="FEMS Microbiol. Lett.">
        <title>Pseudomurein endoisopeptidases PeiW and PeiP, two moderately related members of a novel family of proteases produced in Methanothermobacter strains.</title>
        <authorList>
            <person name="Luo Y."/>
            <person name="Pfister P."/>
            <person name="Leisinger T."/>
            <person name="Wasserfallen A."/>
        </authorList>
    </citation>
    <scope>FUNCTION</scope>
    <scope>CATALYTIC ACTIVITY</scope>
    <scope>BIOPHYSICOCHEMICAL PROPERTIES</scope>
    <scope>COFACTOR</scope>
</reference>
<reference key="3">
    <citation type="journal article" date="2006" name="Mol. Microbiol.">
        <title>Identification of pseudomurein cell wall binding domains.</title>
        <authorList>
            <person name="Steenbakkers P.J."/>
            <person name="Geerts W.J."/>
            <person name="Ayman-Oz N.A."/>
            <person name="Keltjens J.T."/>
        </authorList>
    </citation>
    <scope>DOMAIN</scope>
    <scope>CATALYTIC ACTIVITY</scope>
</reference>
<reference key="4">
    <citation type="journal article" date="2010" name="Archaea">
        <title>Two major archaeal pseudomurein endoisopeptidases: PeiW and PeiP.</title>
        <authorList>
            <person name="Visweswaran G.R."/>
            <person name="Dijkstra B.W."/>
            <person name="Kok J."/>
        </authorList>
    </citation>
    <scope>REVIEW</scope>
</reference>
<reference key="5">
    <citation type="journal article" date="2015" name="Archaea">
        <title>Biochemical Characterisation of Phage Pseudomurein Endoisopeptidases PeiW and PeiP Using Synthetic Peptides.</title>
        <authorList>
            <person name="Schofield L.R."/>
            <person name="Beattie A.K."/>
            <person name="Tootill C.M."/>
            <person name="Dey D."/>
            <person name="Ronimus R.S."/>
        </authorList>
    </citation>
    <scope>CATALYTIC ACTIVITY</scope>
    <scope>COFACTOR</scope>
    <scope>BIOPHYSICOCHEMICAL PROPERTIES</scope>
</reference>
<organism>
    <name type="scientific">Methanobacterium phage psiM2</name>
    <name type="common">PsiM2</name>
    <dbReference type="NCBI Taxonomy" id="77048"/>
    <lineage>
        <taxon>Viruses</taxon>
        <taxon>Duplodnaviria</taxon>
        <taxon>Heunggongvirae</taxon>
        <taxon>Uroviricota</taxon>
        <taxon>Caudoviricetes</taxon>
        <taxon>Methanobavirales</taxon>
        <taxon>Leisingerviridae</taxon>
        <taxon>Psimunavirus</taxon>
        <taxon>Psimunavirus psiM2</taxon>
    </lineage>
</organism>
<protein>
    <recommendedName>
        <fullName>Pseudomurein endoisopeptidase</fullName>
        <shortName evidence="6">Pei</shortName>
        <ecNumber evidence="2 3 5">3.4.22.-</ecNumber>
    </recommendedName>
    <alternativeName>
        <fullName evidence="7">Endolysin</fullName>
    </alternativeName>
    <alternativeName>
        <fullName>Lytic enzyme PeiP</fullName>
    </alternativeName>
</protein>
<proteinExistence type="evidence at protein level"/>
<name>ENLYS_METM2</name>
<gene>
    <name type="primary">peiP</name>
    <name evidence="6" type="ORF">ORF28</name>
</gene>
<sequence length="305" mass="35754">MRSNSVNIETFKDMLKRYEDFKMKNKREPRVIFIRSGGGESIPLETFRDMVRRYNNFKDRYGREPRIVYVTPPEPPVPEVNENTPEYVSITQFKDMLSRYNRFKEVNGREPRVVFIYSGGGPSVSLETFKDMCKRYNQFLEENRREPRIVYVTPPEPPVPEEVREMRRVLGEFKTATQLYTLVSRRCKYKFYYNDQTPNREALKKMVTDGINCTDACQLFKPVIEGLGYSVRIEHVKVRCNDNKWYGHYFLRVAGKELASVSLPSERWTVWDYVSATKTGRPLGAPCCSRGIQHLGWGIVSPKHD</sequence>
<comment type="function">
    <text evidence="2">Cysteine protease that cleaves the cell wall of its host methanogen under hydrogen limitation of the latter (autolysis) (PubMed:11934493). Cleaves the epsilon-Ala-Lys isopeptide bond in the oligopeptides of pseudomurein (PubMed:11934493).</text>
</comment>
<comment type="cofactor">
    <cofactor evidence="2">
        <name>Ca(2+)</name>
        <dbReference type="ChEBI" id="CHEBI:29108"/>
    </cofactor>
    <text evidence="2 5">Activated by Ca(2+).</text>
</comment>
<comment type="biophysicochemical properties">
    <kinetics>
        <KM evidence="5">4.14 mM for synthetic peptide H-Glu-Ala-pNA</KM>
    </kinetics>
    <phDependence>
        <text evidence="2">Optimum pH is 6.4.</text>
    </phDependence>
    <temperatureDependence>
        <text evidence="2">Optimum temperature is 71 degrees Celsius.</text>
    </temperatureDependence>
</comment>
<comment type="subunit">
    <text evidence="1">Monomer.</text>
</comment>
<comment type="domain">
    <text evidence="3">The N-terminus contains a cell wall binding domain (PubMed:17427286). The endoisopeptidase domain is at the C-terminus (PubMed:17427286).</text>
</comment>
<comment type="miscellaneous">
    <text evidence="4">PsiM2 is a defective prophage of methanothermobacter marbuggensis.</text>
</comment>
<comment type="similarity">
    <text evidence="7">Belongs to the Psimunavirus Pseudomurein endoisopeptidase family.</text>
</comment>
<evidence type="ECO:0000250" key="1">
    <source>
        <dbReference type="UniProtKB" id="Q7LYX0"/>
    </source>
</evidence>
<evidence type="ECO:0000269" key="2">
    <source>
    </source>
</evidence>
<evidence type="ECO:0000269" key="3">
    <source>
    </source>
</evidence>
<evidence type="ECO:0000269" key="4">
    <source>
    </source>
</evidence>
<evidence type="ECO:0000269" key="5">
    <source>
    </source>
</evidence>
<evidence type="ECO:0000303" key="6">
    <source>
    </source>
</evidence>
<evidence type="ECO:0000305" key="7"/>
<evidence type="ECO:0000305" key="8">
    <source>
    </source>
</evidence>
<dbReference type="EC" id="3.4.22.-" evidence="2 3 5"/>
<dbReference type="EMBL" id="AF065411">
    <property type="protein sequence ID" value="AAC27067.1"/>
    <property type="molecule type" value="Genomic_DNA"/>
</dbReference>
<dbReference type="PIR" id="T12744">
    <property type="entry name" value="T12744"/>
</dbReference>
<dbReference type="RefSeq" id="NP_046983.1">
    <property type="nucleotide sequence ID" value="NC_001902.1"/>
</dbReference>
<dbReference type="PDB" id="8Z4F">
    <property type="method" value="X-ray"/>
    <property type="resolution" value="1.88 A"/>
    <property type="chains" value="A/B=1-303"/>
</dbReference>
<dbReference type="PDBsum" id="8Z4F"/>
<dbReference type="SMR" id="Q77WJ4"/>
<dbReference type="MEROPS" id="C71.001"/>
<dbReference type="GeneID" id="1261730"/>
<dbReference type="KEGG" id="vg:1261730"/>
<dbReference type="Proteomes" id="UP000001155">
    <property type="component" value="Genome"/>
</dbReference>
<dbReference type="GO" id="GO:0008233">
    <property type="term" value="F:peptidase activity"/>
    <property type="evidence" value="ECO:0007669"/>
    <property type="project" value="UniProtKB-KW"/>
</dbReference>
<dbReference type="GO" id="GO:0042742">
    <property type="term" value="P:defense response to bacterium"/>
    <property type="evidence" value="ECO:0007669"/>
    <property type="project" value="UniProtKB-KW"/>
</dbReference>
<dbReference type="GO" id="GO:0031640">
    <property type="term" value="P:killing of cells of another organism"/>
    <property type="evidence" value="ECO:0007669"/>
    <property type="project" value="UniProtKB-KW"/>
</dbReference>
<dbReference type="GO" id="GO:0006508">
    <property type="term" value="P:proteolysis"/>
    <property type="evidence" value="ECO:0007669"/>
    <property type="project" value="UniProtKB-KW"/>
</dbReference>
<dbReference type="InterPro" id="IPR022119">
    <property type="entry name" value="Peptidase_C71"/>
</dbReference>
<dbReference type="InterPro" id="IPR018975">
    <property type="entry name" value="Pseudomurein-binding_repeat"/>
</dbReference>
<dbReference type="Pfam" id="PF12386">
    <property type="entry name" value="Peptidase_C71"/>
    <property type="match status" value="1"/>
</dbReference>
<dbReference type="Pfam" id="PF09373">
    <property type="entry name" value="PMBR"/>
    <property type="match status" value="4"/>
</dbReference>
<feature type="chain" id="PRO_0000461072" description="Pseudomurein endoisopeptidase">
    <location>
        <begin position="1"/>
        <end position="305"/>
    </location>
</feature>
<feature type="region of interest" description="Pseudomurein-binding repeat" evidence="3">
    <location>
        <begin position="3"/>
        <end position="34"/>
    </location>
</feature>
<feature type="region of interest" description="Pseudomurein-binding repeat" evidence="3">
    <location>
        <begin position="39"/>
        <end position="70"/>
    </location>
</feature>
<feature type="region of interest" description="Pseudomurein-binding repeat" evidence="3">
    <location>
        <begin position="87"/>
        <end position="116"/>
    </location>
</feature>
<feature type="region of interest" description="Pseudomurein-binding repeat" evidence="3">
    <location>
        <begin position="121"/>
        <end position="152"/>
    </location>
</feature>
<feature type="active site" evidence="8">
    <location>
        <position position="213"/>
    </location>
</feature>
<feature type="active site" evidence="8">
    <location>
        <position position="248"/>
    </location>
</feature>
<feature type="active site" evidence="8">
    <location>
        <position position="272"/>
    </location>
</feature>
<keyword id="KW-0002">3D-structure</keyword>
<keyword id="KW-0929">Antimicrobial</keyword>
<keyword id="KW-0081">Bacteriolytic enzyme</keyword>
<keyword id="KW-0204">Cytolysis</keyword>
<keyword id="KW-0578">Host cell lysis by virus</keyword>
<keyword id="KW-0378">Hydrolase</keyword>
<keyword id="KW-0645">Protease</keyword>
<keyword id="KW-1185">Reference proteome</keyword>
<keyword id="KW-1188">Viral release from host cell</keyword>